<gene>
    <name type="primary">POS5</name>
    <name type="ordered locus">YPL188W</name>
</gene>
<reference key="1">
    <citation type="submission" date="1994-12" db="EMBL/GenBank/DDBJ databases">
        <authorList>
            <person name="Gruenbein R."/>
            <person name="Krems B."/>
            <person name="Entian K.-D."/>
        </authorList>
    </citation>
    <scope>NUCLEOTIDE SEQUENCE [GENOMIC DNA]</scope>
</reference>
<reference key="2">
    <citation type="journal article" date="1997" name="Nature">
        <title>The nucleotide sequence of Saccharomyces cerevisiae chromosome XVI.</title>
        <authorList>
            <person name="Bussey H."/>
            <person name="Storms R.K."/>
            <person name="Ahmed A."/>
            <person name="Albermann K."/>
            <person name="Allen E."/>
            <person name="Ansorge W."/>
            <person name="Araujo R."/>
            <person name="Aparicio A."/>
            <person name="Barrell B.G."/>
            <person name="Badcock K."/>
            <person name="Benes V."/>
            <person name="Botstein D."/>
            <person name="Bowman S."/>
            <person name="Brueckner M."/>
            <person name="Carpenter J."/>
            <person name="Cherry J.M."/>
            <person name="Chung E."/>
            <person name="Churcher C.M."/>
            <person name="Coster F."/>
            <person name="Davis K."/>
            <person name="Davis R.W."/>
            <person name="Dietrich F.S."/>
            <person name="Delius H."/>
            <person name="DiPaolo T."/>
            <person name="Dubois E."/>
            <person name="Duesterhoeft A."/>
            <person name="Duncan M."/>
            <person name="Floeth M."/>
            <person name="Fortin N."/>
            <person name="Friesen J.D."/>
            <person name="Fritz C."/>
            <person name="Goffeau A."/>
            <person name="Hall J."/>
            <person name="Hebling U."/>
            <person name="Heumann K."/>
            <person name="Hilbert H."/>
            <person name="Hillier L.W."/>
            <person name="Hunicke-Smith S."/>
            <person name="Hyman R.W."/>
            <person name="Johnston M."/>
            <person name="Kalman S."/>
            <person name="Kleine K."/>
            <person name="Komp C."/>
            <person name="Kurdi O."/>
            <person name="Lashkari D."/>
            <person name="Lew H."/>
            <person name="Lin A."/>
            <person name="Lin D."/>
            <person name="Louis E.J."/>
            <person name="Marathe R."/>
            <person name="Messenguy F."/>
            <person name="Mewes H.-W."/>
            <person name="Mirtipati S."/>
            <person name="Moestl D."/>
            <person name="Mueller-Auer S."/>
            <person name="Namath A."/>
            <person name="Nentwich U."/>
            <person name="Oefner P."/>
            <person name="Pearson D."/>
            <person name="Petel F.X."/>
            <person name="Pohl T.M."/>
            <person name="Purnelle B."/>
            <person name="Rajandream M.A."/>
            <person name="Rechmann S."/>
            <person name="Rieger M."/>
            <person name="Riles L."/>
            <person name="Roberts D."/>
            <person name="Schaefer M."/>
            <person name="Scharfe M."/>
            <person name="Scherens B."/>
            <person name="Schramm S."/>
            <person name="Schroeder M."/>
            <person name="Sdicu A.-M."/>
            <person name="Tettelin H."/>
            <person name="Urrestarazu L.A."/>
            <person name="Ushinsky S."/>
            <person name="Vierendeels F."/>
            <person name="Vissers S."/>
            <person name="Voss H."/>
            <person name="Walsh S.V."/>
            <person name="Wambutt R."/>
            <person name="Wang Y."/>
            <person name="Wedler E."/>
            <person name="Wedler H."/>
            <person name="Winnett E."/>
            <person name="Zhong W.-W."/>
            <person name="Zollner A."/>
            <person name="Vo D.H."/>
            <person name="Hani J."/>
        </authorList>
    </citation>
    <scope>NUCLEOTIDE SEQUENCE [LARGE SCALE GENOMIC DNA]</scope>
    <source>
        <strain>ATCC 204508 / S288c</strain>
    </source>
</reference>
<reference key="3">
    <citation type="journal article" date="2014" name="G3 (Bethesda)">
        <title>The reference genome sequence of Saccharomyces cerevisiae: Then and now.</title>
        <authorList>
            <person name="Engel S.R."/>
            <person name="Dietrich F.S."/>
            <person name="Fisk D.G."/>
            <person name="Binkley G."/>
            <person name="Balakrishnan R."/>
            <person name="Costanzo M.C."/>
            <person name="Dwight S.S."/>
            <person name="Hitz B.C."/>
            <person name="Karra K."/>
            <person name="Nash R.S."/>
            <person name="Weng S."/>
            <person name="Wong E.D."/>
            <person name="Lloyd P."/>
            <person name="Skrzypek M.S."/>
            <person name="Miyasato S.R."/>
            <person name="Simison M."/>
            <person name="Cherry J.M."/>
        </authorList>
    </citation>
    <scope>GENOME REANNOTATION</scope>
    <source>
        <strain>ATCC 204508 / S288c</strain>
    </source>
</reference>
<reference key="4">
    <citation type="journal article" date="1989" name="J. Biochem.">
        <title>Characterization of NADH kinase from Saccharomyces cerevisiae.</title>
        <authorList>
            <person name="Iwahashi Y."/>
            <person name="Hitoshio A."/>
            <person name="Tajima N."/>
            <person name="Nakamura T."/>
        </authorList>
    </citation>
    <scope>BIOPHYSICOCHEMICAL PROPERTIES</scope>
</reference>
<reference key="5">
    <citation type="journal article" date="2003" name="EMBO J.">
        <title>A novel NADH kinase is the mitochondrial source of NADPH in Saccharomyces cerevisiae.</title>
        <authorList>
            <person name="Outten C.E."/>
            <person name="Culotta V.C."/>
        </authorList>
    </citation>
    <scope>FUNCTION</scope>
    <scope>SUBCELLULAR LOCATION</scope>
    <scope>CATALYTIC ACTIVITY</scope>
</reference>
<reference key="6">
    <citation type="journal article" date="2003" name="Eukaryot. Cell">
        <title>POS5 gene of Saccharomyces cerevisiae encodes a mitochondrial NADH kinase required for stability of mitochondrial DNA.</title>
        <authorList>
            <person name="Strand M.K."/>
            <person name="Stuart G.R."/>
            <person name="Longley M.J."/>
            <person name="Graziewicz M.A."/>
            <person name="Dominick O.C."/>
            <person name="Copeland W.C."/>
        </authorList>
    </citation>
    <scope>FUNCTION</scope>
    <scope>SUBCELLULAR LOCATION</scope>
</reference>
<reference key="7">
    <citation type="journal article" date="2003" name="Nature">
        <title>Global analysis of protein localization in budding yeast.</title>
        <authorList>
            <person name="Huh W.-K."/>
            <person name="Falvo J.V."/>
            <person name="Gerke L.C."/>
            <person name="Carroll A.S."/>
            <person name="Howson R.W."/>
            <person name="Weissman J.S."/>
            <person name="O'Shea E.K."/>
        </authorList>
    </citation>
    <scope>SUBCELLULAR LOCATION [LARGE SCALE ANALYSIS]</scope>
</reference>
<reference key="8">
    <citation type="journal article" date="2003" name="Nature">
        <title>Global analysis of protein expression in yeast.</title>
        <authorList>
            <person name="Ghaemmaghami S."/>
            <person name="Huh W.-K."/>
            <person name="Bower K."/>
            <person name="Howson R.W."/>
            <person name="Belle A."/>
            <person name="Dephoure N."/>
            <person name="O'Shea E.K."/>
            <person name="Weissman J.S."/>
        </authorList>
    </citation>
    <scope>LEVEL OF PROTEIN EXPRESSION [LARGE SCALE ANALYSIS]</scope>
</reference>
<reference key="9">
    <citation type="journal article" date="2006" name="J. Proteome Res.">
        <title>Toward the complete yeast mitochondrial proteome: multidimensional separation techniques for mitochondrial proteomics.</title>
        <authorList>
            <person name="Reinders J."/>
            <person name="Zahedi R.P."/>
            <person name="Pfanner N."/>
            <person name="Meisinger C."/>
            <person name="Sickmann A."/>
        </authorList>
    </citation>
    <scope>SUBCELLULAR LOCATION [LARGE SCALE ANALYSIS]</scope>
    <scope>IDENTIFICATION BY MASS SPECTROMETRY</scope>
</reference>
<evidence type="ECO:0000255" key="1"/>
<evidence type="ECO:0000269" key="2">
    <source>
    </source>
</evidence>
<evidence type="ECO:0000269" key="3">
    <source>
    </source>
</evidence>
<evidence type="ECO:0000269" key="4">
    <source>
    </source>
</evidence>
<evidence type="ECO:0000269" key="5">
    <source>
    </source>
</evidence>
<evidence type="ECO:0000269" key="6">
    <source>
    </source>
</evidence>
<evidence type="ECO:0000269" key="7">
    <source>
    </source>
</evidence>
<evidence type="ECO:0000305" key="8"/>
<evidence type="ECO:0000305" key="9">
    <source>
    </source>
</evidence>
<evidence type="ECO:0007829" key="10">
    <source>
        <dbReference type="PDB" id="3AFO"/>
    </source>
</evidence>
<sequence length="414" mass="46247">MFVRVKLNKPVKWYRFYSTLDSHSLKLQSGSKFVKIKPVNNLRSSSSADFVSPPNSKLQSLIWQNPLQNVYITKKPWTPSTREAMVEFITHLHESYPEVNVIVQPDVAEEISQDFKSPLENDPNRPHILYTGPEQDIVNRTDLLVTLGGDGTILHGVSMFGNTQVPPVLAFALGTLGFLSPFDFKEHKKVFQEVISSRAKCLHRTRLECHLKKKDSNSSIVTHAMNDIFLHRGNSPHLTNLDIFIDGEFLTRTTADGVALATPTGSTAYSLSAGGSIVSPLVPAILMTPICPRSLSFRPLILPHSSHIRIKIGSKLNQKPVNSVVKLSVDGIPQQDLDVGDEIYVINEVGTIYIDGTQLPTTRKTENDFNNSKKPKRSGIYCVAKTENDWIRGINELLGFNSSFRLTKRQTDND</sequence>
<protein>
    <recommendedName>
        <fullName>NADH kinase POS5, mitochondrial</fullName>
        <ecNumber evidence="2">2.7.1.86</ecNumber>
    </recommendedName>
</protein>
<accession>Q06892</accession>
<accession>D6W3I1</accession>
<accession>Q08928</accession>
<name>POS5_YEAST</name>
<keyword id="KW-0002">3D-structure</keyword>
<keyword id="KW-0067">ATP-binding</keyword>
<keyword id="KW-0418">Kinase</keyword>
<keyword id="KW-0496">Mitochondrion</keyword>
<keyword id="KW-0520">NAD</keyword>
<keyword id="KW-0521">NADP</keyword>
<keyword id="KW-0547">Nucleotide-binding</keyword>
<keyword id="KW-1185">Reference proteome</keyword>
<keyword id="KW-0808">Transferase</keyword>
<keyword id="KW-0809">Transit peptide</keyword>
<comment type="function">
    <text evidence="2 3">Phosphorylates both NADH and NAD(+), with a twofold preference for NADH. Anti-oxidant factor and key source of the cellular reductant NADPH.</text>
</comment>
<comment type="catalytic activity">
    <reaction evidence="2">
        <text>NADH + ATP = ADP + NADPH + H(+)</text>
        <dbReference type="Rhea" id="RHEA:12260"/>
        <dbReference type="ChEBI" id="CHEBI:15378"/>
        <dbReference type="ChEBI" id="CHEBI:30616"/>
        <dbReference type="ChEBI" id="CHEBI:57783"/>
        <dbReference type="ChEBI" id="CHEBI:57945"/>
        <dbReference type="ChEBI" id="CHEBI:456216"/>
        <dbReference type="EC" id="2.7.1.86"/>
    </reaction>
    <physiologicalReaction direction="left-to-right" evidence="9">
        <dbReference type="Rhea" id="RHEA:12261"/>
    </physiologicalReaction>
</comment>
<comment type="biophysicochemical properties">
    <kinetics>
        <KM evidence="7">105 uM for NADH</KM>
        <KM evidence="7">2.1 mM for ATP</KM>
    </kinetics>
    <phDependence>
        <text evidence="7">Optimum pH is 8.5.</text>
    </phDependence>
</comment>
<comment type="subcellular location">
    <subcellularLocation>
        <location evidence="2 3 4 6">Mitochondrion matrix</location>
    </subcellularLocation>
</comment>
<comment type="miscellaneous">
    <text evidence="5">Present with 4650 molecules/cell in log phase SD medium.</text>
</comment>
<comment type="similarity">
    <text evidence="8">Belongs to the NAD kinase family.</text>
</comment>
<organism>
    <name type="scientific">Saccharomyces cerevisiae (strain ATCC 204508 / S288c)</name>
    <name type="common">Baker's yeast</name>
    <dbReference type="NCBI Taxonomy" id="559292"/>
    <lineage>
        <taxon>Eukaryota</taxon>
        <taxon>Fungi</taxon>
        <taxon>Dikarya</taxon>
        <taxon>Ascomycota</taxon>
        <taxon>Saccharomycotina</taxon>
        <taxon>Saccharomycetes</taxon>
        <taxon>Saccharomycetales</taxon>
        <taxon>Saccharomycetaceae</taxon>
        <taxon>Saccharomyces</taxon>
    </lineage>
</organism>
<proteinExistence type="evidence at protein level"/>
<feature type="transit peptide" description="Mitochondrion" evidence="1">
    <location>
        <begin position="1"/>
        <end status="unknown"/>
    </location>
</feature>
<feature type="chain" id="PRO_0000120715" description="NADH kinase POS5, mitochondrial">
    <location>
        <begin status="unknown"/>
        <end position="414"/>
    </location>
</feature>
<feature type="sequence conflict" description="In Ref. 1; CAA59017." evidence="8" ref="1">
    <original>KP</original>
    <variation>EA</variation>
    <location>
        <begin position="37"/>
        <end position="38"/>
    </location>
</feature>
<feature type="sequence conflict" description="In Ref. 1; CAA59017." evidence="8" ref="1">
    <original>S</original>
    <variation>L</variation>
    <location>
        <position position="180"/>
    </location>
</feature>
<feature type="sequence conflict" description="In Ref. 1; CAA59017." evidence="8" ref="1">
    <original>V</original>
    <variation>D</variation>
    <location>
        <position position="329"/>
    </location>
</feature>
<feature type="sequence conflict" description="In Ref. 1; CAA59017." evidence="8" ref="1">
    <original>I</original>
    <variation>S</variation>
    <location>
        <position position="343"/>
    </location>
</feature>
<feature type="sequence conflict" description="In Ref. 1; CAA59017." evidence="8" ref="1">
    <original>LGFN</original>
    <variation>CRIH</variation>
    <location>
        <begin position="398"/>
        <end position="401"/>
    </location>
</feature>
<feature type="strand" evidence="10">
    <location>
        <begin position="34"/>
        <end position="38"/>
    </location>
</feature>
<feature type="helix" evidence="10">
    <location>
        <begin position="39"/>
        <end position="41"/>
    </location>
</feature>
<feature type="strand" evidence="10">
    <location>
        <begin position="49"/>
        <end position="51"/>
    </location>
</feature>
<feature type="strand" evidence="10">
    <location>
        <begin position="59"/>
        <end position="62"/>
    </location>
</feature>
<feature type="strand" evidence="10">
    <location>
        <begin position="69"/>
        <end position="74"/>
    </location>
</feature>
<feature type="helix" evidence="10">
    <location>
        <begin position="79"/>
        <end position="95"/>
    </location>
</feature>
<feature type="strand" evidence="10">
    <location>
        <begin position="100"/>
        <end position="102"/>
    </location>
</feature>
<feature type="helix" evidence="10">
    <location>
        <begin position="105"/>
        <end position="112"/>
    </location>
</feature>
<feature type="helix" evidence="10">
    <location>
        <begin position="119"/>
        <end position="121"/>
    </location>
</feature>
<feature type="strand" evidence="10">
    <location>
        <begin position="127"/>
        <end position="131"/>
    </location>
</feature>
<feature type="helix" evidence="10">
    <location>
        <begin position="134"/>
        <end position="140"/>
    </location>
</feature>
<feature type="strand" evidence="10">
    <location>
        <begin position="142"/>
        <end position="149"/>
    </location>
</feature>
<feature type="helix" evidence="10">
    <location>
        <begin position="150"/>
        <end position="158"/>
    </location>
</feature>
<feature type="turn" evidence="10">
    <location>
        <begin position="159"/>
        <end position="162"/>
    </location>
</feature>
<feature type="strand" evidence="10">
    <location>
        <begin position="168"/>
        <end position="172"/>
    </location>
</feature>
<feature type="helix" evidence="10">
    <location>
        <begin position="184"/>
        <end position="186"/>
    </location>
</feature>
<feature type="helix" evidence="10">
    <location>
        <begin position="187"/>
        <end position="195"/>
    </location>
</feature>
<feature type="strand" evidence="10">
    <location>
        <begin position="200"/>
        <end position="204"/>
    </location>
</feature>
<feature type="strand" evidence="10">
    <location>
        <begin position="207"/>
        <end position="212"/>
    </location>
</feature>
<feature type="strand" evidence="10">
    <location>
        <begin position="220"/>
        <end position="231"/>
    </location>
</feature>
<feature type="strand" evidence="10">
    <location>
        <begin position="239"/>
        <end position="245"/>
    </location>
</feature>
<feature type="strand" evidence="10">
    <location>
        <begin position="248"/>
        <end position="261"/>
    </location>
</feature>
<feature type="helix" evidence="10">
    <location>
        <begin position="264"/>
        <end position="267"/>
    </location>
</feature>
<feature type="helix" evidence="10">
    <location>
        <begin position="269"/>
        <end position="272"/>
    </location>
</feature>
<feature type="strand" evidence="10">
    <location>
        <begin position="284"/>
        <end position="293"/>
    </location>
</feature>
<feature type="strand" evidence="10">
    <location>
        <begin position="300"/>
        <end position="303"/>
    </location>
</feature>
<feature type="strand" evidence="10">
    <location>
        <begin position="308"/>
        <end position="312"/>
    </location>
</feature>
<feature type="strand" evidence="10">
    <location>
        <begin position="321"/>
        <end position="323"/>
    </location>
</feature>
<feature type="strand" evidence="10">
    <location>
        <begin position="325"/>
        <end position="329"/>
    </location>
</feature>
<feature type="strand" evidence="10">
    <location>
        <begin position="332"/>
        <end position="337"/>
    </location>
</feature>
<feature type="strand" evidence="10">
    <location>
        <begin position="342"/>
        <end position="349"/>
    </location>
</feature>
<feature type="strand" evidence="10">
    <location>
        <begin position="379"/>
        <end position="383"/>
    </location>
</feature>
<feature type="helix" evidence="10">
    <location>
        <begin position="389"/>
        <end position="396"/>
    </location>
</feature>
<dbReference type="EC" id="2.7.1.86" evidence="2"/>
<dbReference type="EMBL" id="X84260">
    <property type="protein sequence ID" value="CAA59017.1"/>
    <property type="molecule type" value="Genomic_DNA"/>
</dbReference>
<dbReference type="EMBL" id="Z73544">
    <property type="protein sequence ID" value="CAA97900.1"/>
    <property type="molecule type" value="Genomic_DNA"/>
</dbReference>
<dbReference type="EMBL" id="BK006949">
    <property type="protein sequence ID" value="DAA11247.1"/>
    <property type="molecule type" value="Genomic_DNA"/>
</dbReference>
<dbReference type="PIR" id="S65200">
    <property type="entry name" value="S65200"/>
</dbReference>
<dbReference type="RefSeq" id="NP_015136.1">
    <property type="nucleotide sequence ID" value="NM_001184002.1"/>
</dbReference>
<dbReference type="PDB" id="3AFO">
    <property type="method" value="X-ray"/>
    <property type="resolution" value="2.00 A"/>
    <property type="chains" value="A/B=27-414"/>
</dbReference>
<dbReference type="PDBsum" id="3AFO"/>
<dbReference type="SMR" id="Q06892"/>
<dbReference type="BioGRID" id="35995">
    <property type="interactions" value="62"/>
</dbReference>
<dbReference type="DIP" id="DIP-5503N"/>
<dbReference type="FunCoup" id="Q06892">
    <property type="interactions" value="40"/>
</dbReference>
<dbReference type="IntAct" id="Q06892">
    <property type="interactions" value="4"/>
</dbReference>
<dbReference type="STRING" id="4932.YPL188W"/>
<dbReference type="iPTMnet" id="Q06892"/>
<dbReference type="PaxDb" id="4932-YPL188W"/>
<dbReference type="PeptideAtlas" id="Q06892"/>
<dbReference type="EnsemblFungi" id="YPL188W_mRNA">
    <property type="protein sequence ID" value="YPL188W"/>
    <property type="gene ID" value="YPL188W"/>
</dbReference>
<dbReference type="GeneID" id="855913"/>
<dbReference type="KEGG" id="sce:YPL188W"/>
<dbReference type="AGR" id="SGD:S000006109"/>
<dbReference type="SGD" id="S000006109">
    <property type="gene designation" value="POS5"/>
</dbReference>
<dbReference type="VEuPathDB" id="FungiDB:YPL188W"/>
<dbReference type="eggNOG" id="KOG2178">
    <property type="taxonomic scope" value="Eukaryota"/>
</dbReference>
<dbReference type="HOGENOM" id="CLU_008831_10_2_1"/>
<dbReference type="InParanoid" id="Q06892"/>
<dbReference type="OMA" id="IPKYQES"/>
<dbReference type="OrthoDB" id="24581at2759"/>
<dbReference type="BioCyc" id="MetaCyc:G3O-34081-MONOMER"/>
<dbReference type="BioCyc" id="YEAST:G3O-34081-MONOMER"/>
<dbReference type="BRENDA" id="2.7.1.23">
    <property type="organism ID" value="984"/>
</dbReference>
<dbReference type="BRENDA" id="2.7.1.86">
    <property type="organism ID" value="984"/>
</dbReference>
<dbReference type="BioGRID-ORCS" id="855913">
    <property type="hits" value="1 hit in 10 CRISPR screens"/>
</dbReference>
<dbReference type="EvolutionaryTrace" id="Q06892"/>
<dbReference type="PRO" id="PR:Q06892"/>
<dbReference type="Proteomes" id="UP000002311">
    <property type="component" value="Chromosome XVI"/>
</dbReference>
<dbReference type="RNAct" id="Q06892">
    <property type="molecule type" value="protein"/>
</dbReference>
<dbReference type="GO" id="GO:0005759">
    <property type="term" value="C:mitochondrial matrix"/>
    <property type="evidence" value="ECO:0000314"/>
    <property type="project" value="SGD"/>
</dbReference>
<dbReference type="GO" id="GO:0005739">
    <property type="term" value="C:mitochondrion"/>
    <property type="evidence" value="ECO:0007005"/>
    <property type="project" value="SGD"/>
</dbReference>
<dbReference type="GO" id="GO:0005524">
    <property type="term" value="F:ATP binding"/>
    <property type="evidence" value="ECO:0007669"/>
    <property type="project" value="UniProtKB-KW"/>
</dbReference>
<dbReference type="GO" id="GO:0003951">
    <property type="term" value="F:NAD+ kinase activity"/>
    <property type="evidence" value="ECO:0000318"/>
    <property type="project" value="GO_Central"/>
</dbReference>
<dbReference type="GO" id="GO:0042736">
    <property type="term" value="F:NADH kinase activity"/>
    <property type="evidence" value="ECO:0000314"/>
    <property type="project" value="SGD"/>
</dbReference>
<dbReference type="GO" id="GO:0034599">
    <property type="term" value="P:cellular response to oxidative stress"/>
    <property type="evidence" value="ECO:0000315"/>
    <property type="project" value="SGD"/>
</dbReference>
<dbReference type="GO" id="GO:0016226">
    <property type="term" value="P:iron-sulfur cluster assembly"/>
    <property type="evidence" value="ECO:0000315"/>
    <property type="project" value="SGD"/>
</dbReference>
<dbReference type="GO" id="GO:0019674">
    <property type="term" value="P:NAD metabolic process"/>
    <property type="evidence" value="ECO:0007669"/>
    <property type="project" value="InterPro"/>
</dbReference>
<dbReference type="GO" id="GO:0006741">
    <property type="term" value="P:NADP biosynthetic process"/>
    <property type="evidence" value="ECO:0000314"/>
    <property type="project" value="SGD"/>
</dbReference>
<dbReference type="FunFam" id="2.60.200.30:FF:000014">
    <property type="entry name" value="Mitochondrial NADH kinase"/>
    <property type="match status" value="1"/>
</dbReference>
<dbReference type="FunFam" id="3.40.50.10330:FF:000034">
    <property type="entry name" value="Mitochondrial NADH kinase"/>
    <property type="match status" value="1"/>
</dbReference>
<dbReference type="Gene3D" id="3.40.50.10330">
    <property type="entry name" value="Probable inorganic polyphosphate/atp-NAD kinase, domain 1"/>
    <property type="match status" value="1"/>
</dbReference>
<dbReference type="Gene3D" id="2.60.200.30">
    <property type="entry name" value="Probable inorganic polyphosphate/atp-NAD kinase, domain 2"/>
    <property type="match status" value="1"/>
</dbReference>
<dbReference type="HAMAP" id="MF_00361">
    <property type="entry name" value="NAD_kinase"/>
    <property type="match status" value="1"/>
</dbReference>
<dbReference type="InterPro" id="IPR017438">
    <property type="entry name" value="ATP-NAD_kinase_N"/>
</dbReference>
<dbReference type="InterPro" id="IPR017437">
    <property type="entry name" value="ATP-NAD_kinase_PpnK-typ_C"/>
</dbReference>
<dbReference type="InterPro" id="IPR016064">
    <property type="entry name" value="NAD/diacylglycerol_kinase_sf"/>
</dbReference>
<dbReference type="InterPro" id="IPR002504">
    <property type="entry name" value="NADK"/>
</dbReference>
<dbReference type="PANTHER" id="PTHR20275">
    <property type="entry name" value="NAD KINASE"/>
    <property type="match status" value="1"/>
</dbReference>
<dbReference type="PANTHER" id="PTHR20275:SF26">
    <property type="entry name" value="NADH KINASE POS5, MITOCHONDRIAL"/>
    <property type="match status" value="1"/>
</dbReference>
<dbReference type="Pfam" id="PF01513">
    <property type="entry name" value="NAD_kinase"/>
    <property type="match status" value="1"/>
</dbReference>
<dbReference type="Pfam" id="PF20143">
    <property type="entry name" value="NAD_kinase_C"/>
    <property type="match status" value="1"/>
</dbReference>
<dbReference type="SUPFAM" id="SSF111331">
    <property type="entry name" value="NAD kinase/diacylglycerol kinase-like"/>
    <property type="match status" value="1"/>
</dbReference>